<organism>
    <name type="scientific">Nautilia profundicola (strain ATCC BAA-1463 / DSM 18972 / AmH)</name>
    <dbReference type="NCBI Taxonomy" id="598659"/>
    <lineage>
        <taxon>Bacteria</taxon>
        <taxon>Pseudomonadati</taxon>
        <taxon>Campylobacterota</taxon>
        <taxon>Epsilonproteobacteria</taxon>
        <taxon>Nautiliales</taxon>
        <taxon>Nautiliaceae</taxon>
        <taxon>Nautilia</taxon>
    </lineage>
</organism>
<feature type="chain" id="PRO_1000213367" description="3-isopropylmalate dehydratase small subunit">
    <location>
        <begin position="1"/>
        <end position="166"/>
    </location>
</feature>
<comment type="function">
    <text evidence="1">Catalyzes the isomerization between 2-isopropylmalate and 3-isopropylmalate, via the formation of 2-isopropylmaleate.</text>
</comment>
<comment type="catalytic activity">
    <reaction evidence="1">
        <text>(2R,3S)-3-isopropylmalate = (2S)-2-isopropylmalate</text>
        <dbReference type="Rhea" id="RHEA:32287"/>
        <dbReference type="ChEBI" id="CHEBI:1178"/>
        <dbReference type="ChEBI" id="CHEBI:35121"/>
        <dbReference type="EC" id="4.2.1.33"/>
    </reaction>
</comment>
<comment type="pathway">
    <text evidence="1">Amino-acid biosynthesis; L-leucine biosynthesis; L-leucine from 3-methyl-2-oxobutanoate: step 2/4.</text>
</comment>
<comment type="subunit">
    <text evidence="1">Heterodimer of LeuC and LeuD.</text>
</comment>
<comment type="similarity">
    <text evidence="1">Belongs to the LeuD family. LeuD type 2 subfamily.</text>
</comment>
<evidence type="ECO:0000255" key="1">
    <source>
        <dbReference type="HAMAP-Rule" id="MF_01032"/>
    </source>
</evidence>
<keyword id="KW-0028">Amino-acid biosynthesis</keyword>
<keyword id="KW-0100">Branched-chain amino acid biosynthesis</keyword>
<keyword id="KW-0432">Leucine biosynthesis</keyword>
<keyword id="KW-0456">Lyase</keyword>
<protein>
    <recommendedName>
        <fullName evidence="1">3-isopropylmalate dehydratase small subunit</fullName>
        <ecNumber evidence="1">4.2.1.33</ecNumber>
    </recommendedName>
    <alternativeName>
        <fullName evidence="1">Alpha-IPM isomerase</fullName>
        <shortName evidence="1">IPMI</shortName>
    </alternativeName>
    <alternativeName>
        <fullName evidence="1">Isopropylmalate isomerase</fullName>
    </alternativeName>
</protein>
<gene>
    <name evidence="1" type="primary">leuD</name>
    <name type="ordered locus">NAMH_1247</name>
</gene>
<proteinExistence type="inferred from homology"/>
<reference key="1">
    <citation type="journal article" date="2009" name="PLoS Genet.">
        <title>Adaptations to submarine hydrothermal environments exemplified by the genome of Nautilia profundicola.</title>
        <authorList>
            <person name="Campbell B.J."/>
            <person name="Smith J.L."/>
            <person name="Hanson T.E."/>
            <person name="Klotz M.G."/>
            <person name="Stein L.Y."/>
            <person name="Lee C.K."/>
            <person name="Wu D."/>
            <person name="Robinson J.M."/>
            <person name="Khouri H.M."/>
            <person name="Eisen J.A."/>
            <person name="Cary S.C."/>
        </authorList>
    </citation>
    <scope>NUCLEOTIDE SEQUENCE [LARGE SCALE GENOMIC DNA]</scope>
    <source>
        <strain>ATCC BAA-1463 / DSM 18972 / AmH</strain>
    </source>
</reference>
<accession>B9L5K2</accession>
<dbReference type="EC" id="4.2.1.33" evidence="1"/>
<dbReference type="EMBL" id="CP001279">
    <property type="protein sequence ID" value="ACM93015.1"/>
    <property type="molecule type" value="Genomic_DNA"/>
</dbReference>
<dbReference type="RefSeq" id="WP_015902067.1">
    <property type="nucleotide sequence ID" value="NC_012115.1"/>
</dbReference>
<dbReference type="SMR" id="B9L5K2"/>
<dbReference type="STRING" id="598659.NAMH_1247"/>
<dbReference type="KEGG" id="nam:NAMH_1247"/>
<dbReference type="eggNOG" id="COG0066">
    <property type="taxonomic scope" value="Bacteria"/>
</dbReference>
<dbReference type="HOGENOM" id="CLU_081378_1_1_7"/>
<dbReference type="OrthoDB" id="9777465at2"/>
<dbReference type="UniPathway" id="UPA00048">
    <property type="reaction ID" value="UER00071"/>
</dbReference>
<dbReference type="Proteomes" id="UP000000448">
    <property type="component" value="Chromosome"/>
</dbReference>
<dbReference type="GO" id="GO:0003861">
    <property type="term" value="F:3-isopropylmalate dehydratase activity"/>
    <property type="evidence" value="ECO:0007669"/>
    <property type="project" value="UniProtKB-UniRule"/>
</dbReference>
<dbReference type="GO" id="GO:0009098">
    <property type="term" value="P:L-leucine biosynthetic process"/>
    <property type="evidence" value="ECO:0007669"/>
    <property type="project" value="UniProtKB-UniRule"/>
</dbReference>
<dbReference type="CDD" id="cd01577">
    <property type="entry name" value="IPMI_Swivel"/>
    <property type="match status" value="1"/>
</dbReference>
<dbReference type="FunFam" id="3.20.19.10:FF:000007">
    <property type="entry name" value="Isopropylmalate/citramalate isomerase small subunit"/>
    <property type="match status" value="1"/>
</dbReference>
<dbReference type="Gene3D" id="3.20.19.10">
    <property type="entry name" value="Aconitase, domain 4"/>
    <property type="match status" value="1"/>
</dbReference>
<dbReference type="HAMAP" id="MF_01032">
    <property type="entry name" value="LeuD_type2"/>
    <property type="match status" value="1"/>
</dbReference>
<dbReference type="InterPro" id="IPR015928">
    <property type="entry name" value="Aconitase/3IPM_dehydase_swvl"/>
</dbReference>
<dbReference type="InterPro" id="IPR000573">
    <property type="entry name" value="AconitaseA/IPMdHydase_ssu_swvl"/>
</dbReference>
<dbReference type="InterPro" id="IPR033940">
    <property type="entry name" value="IPMI_Swivel"/>
</dbReference>
<dbReference type="InterPro" id="IPR050075">
    <property type="entry name" value="LeuD"/>
</dbReference>
<dbReference type="InterPro" id="IPR011824">
    <property type="entry name" value="LeuD/DmdB_bac"/>
</dbReference>
<dbReference type="InterPro" id="IPR011827">
    <property type="entry name" value="LeuD_type2/HacB/DmdB"/>
</dbReference>
<dbReference type="NCBIfam" id="TIGR02084">
    <property type="entry name" value="leud"/>
    <property type="match status" value="1"/>
</dbReference>
<dbReference type="NCBIfam" id="TIGR02087">
    <property type="entry name" value="LEUD_arch"/>
    <property type="match status" value="1"/>
</dbReference>
<dbReference type="PANTHER" id="PTHR43345:SF2">
    <property type="entry name" value="3-ISOPROPYLMALATE DEHYDRATASE SMALL SUBUNIT 1"/>
    <property type="match status" value="1"/>
</dbReference>
<dbReference type="PANTHER" id="PTHR43345">
    <property type="entry name" value="3-ISOPROPYLMALATE DEHYDRATASE SMALL SUBUNIT 2-RELATED-RELATED"/>
    <property type="match status" value="1"/>
</dbReference>
<dbReference type="Pfam" id="PF00694">
    <property type="entry name" value="Aconitase_C"/>
    <property type="match status" value="1"/>
</dbReference>
<dbReference type="SUPFAM" id="SSF52016">
    <property type="entry name" value="LeuD/IlvD-like"/>
    <property type="match status" value="1"/>
</dbReference>
<name>LEUD_NAUPA</name>
<sequence length="166" mass="18381">MNVITGRVWKFGDNIDTDLIIPARYLNTSDPHELAKHVMEDADPEFPSKVRPGDIIVAGYNFGSGSSREHAPIALKAAGVAAVIAKSFARIFYRNSFNMGLPIFELLESDEINEGDLIKIDLDNGIIHNVDTGKDYKFTPIPEFMQELIAAGGLINFAKEMLKENK</sequence>